<dbReference type="EMBL" id="CP000237">
    <property type="protein sequence ID" value="ABD45816.1"/>
    <property type="molecule type" value="Genomic_DNA"/>
</dbReference>
<dbReference type="RefSeq" id="WP_011451995.1">
    <property type="nucleotide sequence ID" value="NC_007798.1"/>
</dbReference>
<dbReference type="SMR" id="Q2GDF7"/>
<dbReference type="STRING" id="222891.NSE_0609"/>
<dbReference type="KEGG" id="nse:NSE_0609"/>
<dbReference type="eggNOG" id="COG0323">
    <property type="taxonomic scope" value="Bacteria"/>
</dbReference>
<dbReference type="HOGENOM" id="CLU_004131_4_2_5"/>
<dbReference type="OrthoDB" id="9763467at2"/>
<dbReference type="Proteomes" id="UP000001942">
    <property type="component" value="Chromosome"/>
</dbReference>
<dbReference type="GO" id="GO:0032300">
    <property type="term" value="C:mismatch repair complex"/>
    <property type="evidence" value="ECO:0007669"/>
    <property type="project" value="InterPro"/>
</dbReference>
<dbReference type="GO" id="GO:0005524">
    <property type="term" value="F:ATP binding"/>
    <property type="evidence" value="ECO:0007669"/>
    <property type="project" value="InterPro"/>
</dbReference>
<dbReference type="GO" id="GO:0016887">
    <property type="term" value="F:ATP hydrolysis activity"/>
    <property type="evidence" value="ECO:0007669"/>
    <property type="project" value="InterPro"/>
</dbReference>
<dbReference type="GO" id="GO:0140664">
    <property type="term" value="F:ATP-dependent DNA damage sensor activity"/>
    <property type="evidence" value="ECO:0007669"/>
    <property type="project" value="InterPro"/>
</dbReference>
<dbReference type="GO" id="GO:0030983">
    <property type="term" value="F:mismatched DNA binding"/>
    <property type="evidence" value="ECO:0007669"/>
    <property type="project" value="InterPro"/>
</dbReference>
<dbReference type="GO" id="GO:0006298">
    <property type="term" value="P:mismatch repair"/>
    <property type="evidence" value="ECO:0007669"/>
    <property type="project" value="UniProtKB-UniRule"/>
</dbReference>
<dbReference type="CDD" id="cd16926">
    <property type="entry name" value="HATPase_MutL-MLH-PMS-like"/>
    <property type="match status" value="1"/>
</dbReference>
<dbReference type="CDD" id="cd00782">
    <property type="entry name" value="MutL_Trans"/>
    <property type="match status" value="1"/>
</dbReference>
<dbReference type="FunFam" id="3.30.565.10:FF:000003">
    <property type="entry name" value="DNA mismatch repair endonuclease MutL"/>
    <property type="match status" value="1"/>
</dbReference>
<dbReference type="Gene3D" id="3.30.230.10">
    <property type="match status" value="1"/>
</dbReference>
<dbReference type="Gene3D" id="3.30.565.10">
    <property type="entry name" value="Histidine kinase-like ATPase, C-terminal domain"/>
    <property type="match status" value="1"/>
</dbReference>
<dbReference type="Gene3D" id="3.30.1540.20">
    <property type="entry name" value="MutL, C-terminal domain, dimerisation subdomain"/>
    <property type="match status" value="1"/>
</dbReference>
<dbReference type="Gene3D" id="3.30.1370.100">
    <property type="entry name" value="MutL, C-terminal domain, regulatory subdomain"/>
    <property type="match status" value="1"/>
</dbReference>
<dbReference type="HAMAP" id="MF_00149">
    <property type="entry name" value="DNA_mis_repair"/>
    <property type="match status" value="1"/>
</dbReference>
<dbReference type="InterPro" id="IPR014762">
    <property type="entry name" value="DNA_mismatch_repair_CS"/>
</dbReference>
<dbReference type="InterPro" id="IPR020667">
    <property type="entry name" value="DNA_mismatch_repair_MutL"/>
</dbReference>
<dbReference type="InterPro" id="IPR013507">
    <property type="entry name" value="DNA_mismatch_S5_2-like"/>
</dbReference>
<dbReference type="InterPro" id="IPR036890">
    <property type="entry name" value="HATPase_C_sf"/>
</dbReference>
<dbReference type="InterPro" id="IPR002099">
    <property type="entry name" value="MutL/Mlh/PMS"/>
</dbReference>
<dbReference type="InterPro" id="IPR038973">
    <property type="entry name" value="MutL/Mlh/Pms-like"/>
</dbReference>
<dbReference type="InterPro" id="IPR014790">
    <property type="entry name" value="MutL_C"/>
</dbReference>
<dbReference type="InterPro" id="IPR042120">
    <property type="entry name" value="MutL_C_dimsub"/>
</dbReference>
<dbReference type="InterPro" id="IPR042121">
    <property type="entry name" value="MutL_C_regsub"/>
</dbReference>
<dbReference type="InterPro" id="IPR037198">
    <property type="entry name" value="MutL_C_sf"/>
</dbReference>
<dbReference type="InterPro" id="IPR020568">
    <property type="entry name" value="Ribosomal_Su5_D2-typ_SF"/>
</dbReference>
<dbReference type="InterPro" id="IPR014721">
    <property type="entry name" value="Ribsml_uS5_D2-typ_fold_subgr"/>
</dbReference>
<dbReference type="NCBIfam" id="TIGR00585">
    <property type="entry name" value="mutl"/>
    <property type="match status" value="1"/>
</dbReference>
<dbReference type="PANTHER" id="PTHR10073">
    <property type="entry name" value="DNA MISMATCH REPAIR PROTEIN MLH, PMS, MUTL"/>
    <property type="match status" value="1"/>
</dbReference>
<dbReference type="PANTHER" id="PTHR10073:SF12">
    <property type="entry name" value="DNA MISMATCH REPAIR PROTEIN MLH1"/>
    <property type="match status" value="1"/>
</dbReference>
<dbReference type="Pfam" id="PF01119">
    <property type="entry name" value="DNA_mis_repair"/>
    <property type="match status" value="1"/>
</dbReference>
<dbReference type="Pfam" id="PF13589">
    <property type="entry name" value="HATPase_c_3"/>
    <property type="match status" value="1"/>
</dbReference>
<dbReference type="Pfam" id="PF08676">
    <property type="entry name" value="MutL_C"/>
    <property type="match status" value="1"/>
</dbReference>
<dbReference type="SMART" id="SM01340">
    <property type="entry name" value="DNA_mis_repair"/>
    <property type="match status" value="1"/>
</dbReference>
<dbReference type="SMART" id="SM00853">
    <property type="entry name" value="MutL_C"/>
    <property type="match status" value="1"/>
</dbReference>
<dbReference type="SUPFAM" id="SSF55874">
    <property type="entry name" value="ATPase domain of HSP90 chaperone/DNA topoisomerase II/histidine kinase"/>
    <property type="match status" value="1"/>
</dbReference>
<dbReference type="SUPFAM" id="SSF118116">
    <property type="entry name" value="DNA mismatch repair protein MutL"/>
    <property type="match status" value="1"/>
</dbReference>
<dbReference type="SUPFAM" id="SSF54211">
    <property type="entry name" value="Ribosomal protein S5 domain 2-like"/>
    <property type="match status" value="1"/>
</dbReference>
<dbReference type="PROSITE" id="PS00058">
    <property type="entry name" value="DNA_MISMATCH_REPAIR_1"/>
    <property type="match status" value="1"/>
</dbReference>
<organism>
    <name type="scientific">Neorickettsia sennetsu (strain ATCC VR-367 / Miyayama)</name>
    <name type="common">Ehrlichia sennetsu</name>
    <dbReference type="NCBI Taxonomy" id="222891"/>
    <lineage>
        <taxon>Bacteria</taxon>
        <taxon>Pseudomonadati</taxon>
        <taxon>Pseudomonadota</taxon>
        <taxon>Alphaproteobacteria</taxon>
        <taxon>Rickettsiales</taxon>
        <taxon>Anaplasmataceae</taxon>
        <taxon>Neorickettsia</taxon>
    </lineage>
</organism>
<protein>
    <recommendedName>
        <fullName evidence="1">DNA mismatch repair protein MutL</fullName>
    </recommendedName>
</protein>
<accession>Q2GDF7</accession>
<feature type="chain" id="PRO_1000010048" description="DNA mismatch repair protein MutL">
    <location>
        <begin position="1"/>
        <end position="652"/>
    </location>
</feature>
<comment type="function">
    <text evidence="1">This protein is involved in the repair of mismatches in DNA. It is required for dam-dependent methyl-directed DNA mismatch repair. May act as a 'molecular matchmaker', a protein that promotes the formation of a stable complex between two or more DNA-binding proteins in an ATP-dependent manner without itself being part of a final effector complex.</text>
</comment>
<comment type="similarity">
    <text evidence="1">Belongs to the DNA mismatch repair MutL/HexB family.</text>
</comment>
<keyword id="KW-0227">DNA damage</keyword>
<keyword id="KW-0234">DNA repair</keyword>
<evidence type="ECO:0000255" key="1">
    <source>
        <dbReference type="HAMAP-Rule" id="MF_00149"/>
    </source>
</evidence>
<name>MUTL_NEOSM</name>
<gene>
    <name evidence="1" type="primary">mutL</name>
    <name type="ordered locus">NSE_0609</name>
</gene>
<proteinExistence type="inferred from homology"/>
<sequence length="652" mass="74400">MKIHILPIEIINKIAAGEILEKPANAVKELVENAIDAGSTSIKVELEEVGRNLIRVTDNGVGISREDLPLAIEKHATSKLNTKDLYDISYLGFRGEALHSIAITSEMKIASCFNGEGYVIDAQTKEVKPHHIKCGTLVEVRKLFHNIPNKLRFLRSEKTELSSIIELLNRLALVNPNIAFELISNGRQVFDYQTATQLKRMEQLKVLGKEFVENMIHVKHTNDGIFGELFLGLPTLTQKRNNCLIFVNGRPVKDSVISSVMRHAYNDYIPKNTYPIAVIFIRVHNNEVDVNIHPNKSEVKFRDPQVIRRFLLSVSSRSLLQCGRSTSTTVADRAVEQFNQLLKKQTAFRKETVSKTTESGFFQSPKAKKAIDQSQEYAKQFEGKRNLDFDQMQNNNGPFHFSTDQSEEALPLMSHKKTSEDYSNKLPLEKQQSPSIFLHDNRDTSFLQQQLRKINHCEHLQNEKHFETFGKFKCQVHGTFIITETENEMIIIDQHAAHERILYEQMKKSITSPGQNLLTAEFVPLSEKAVEILSFNVEKLKEIGLVVERVSHCAVMVNSLPEAFKNVPTNELIEDIASLLEEEIEPKTLLERIHANIACKRAIKANHNLTREEIEELLTLMEDIPHTGQCNHGRPTHIRLPRKEIEKLFLRS</sequence>
<reference key="1">
    <citation type="journal article" date="2006" name="PLoS Genet.">
        <title>Comparative genomics of emerging human ehrlichiosis agents.</title>
        <authorList>
            <person name="Dunning Hotopp J.C."/>
            <person name="Lin M."/>
            <person name="Madupu R."/>
            <person name="Crabtree J."/>
            <person name="Angiuoli S.V."/>
            <person name="Eisen J.A."/>
            <person name="Seshadri R."/>
            <person name="Ren Q."/>
            <person name="Wu M."/>
            <person name="Utterback T.R."/>
            <person name="Smith S."/>
            <person name="Lewis M."/>
            <person name="Khouri H."/>
            <person name="Zhang C."/>
            <person name="Niu H."/>
            <person name="Lin Q."/>
            <person name="Ohashi N."/>
            <person name="Zhi N."/>
            <person name="Nelson W.C."/>
            <person name="Brinkac L.M."/>
            <person name="Dodson R.J."/>
            <person name="Rosovitz M.J."/>
            <person name="Sundaram J.P."/>
            <person name="Daugherty S.C."/>
            <person name="Davidsen T."/>
            <person name="Durkin A.S."/>
            <person name="Gwinn M.L."/>
            <person name="Haft D.H."/>
            <person name="Selengut J.D."/>
            <person name="Sullivan S.A."/>
            <person name="Zafar N."/>
            <person name="Zhou L."/>
            <person name="Benahmed F."/>
            <person name="Forberger H."/>
            <person name="Halpin R."/>
            <person name="Mulligan S."/>
            <person name="Robinson J."/>
            <person name="White O."/>
            <person name="Rikihisa Y."/>
            <person name="Tettelin H."/>
        </authorList>
    </citation>
    <scope>NUCLEOTIDE SEQUENCE [LARGE SCALE GENOMIC DNA]</scope>
    <source>
        <strain>ATCC VR-367 / Miyayama</strain>
    </source>
</reference>